<organism>
    <name type="scientific">Yersinia pestis (strain Pestoides F)</name>
    <dbReference type="NCBI Taxonomy" id="386656"/>
    <lineage>
        <taxon>Bacteria</taxon>
        <taxon>Pseudomonadati</taxon>
        <taxon>Pseudomonadota</taxon>
        <taxon>Gammaproteobacteria</taxon>
        <taxon>Enterobacterales</taxon>
        <taxon>Yersiniaceae</taxon>
        <taxon>Yersinia</taxon>
    </lineage>
</organism>
<proteinExistence type="inferred from homology"/>
<reference key="1">
    <citation type="submission" date="2007-02" db="EMBL/GenBank/DDBJ databases">
        <title>Complete sequence of chromosome of Yersinia pestis Pestoides F.</title>
        <authorList>
            <consortium name="US DOE Joint Genome Institute"/>
            <person name="Copeland A."/>
            <person name="Lucas S."/>
            <person name="Lapidus A."/>
            <person name="Barry K."/>
            <person name="Detter J.C."/>
            <person name="Glavina del Rio T."/>
            <person name="Hammon N."/>
            <person name="Israni S."/>
            <person name="Dalin E."/>
            <person name="Tice H."/>
            <person name="Pitluck S."/>
            <person name="Di Bartolo G."/>
            <person name="Chain P."/>
            <person name="Malfatti S."/>
            <person name="Shin M."/>
            <person name="Vergez L."/>
            <person name="Schmutz J."/>
            <person name="Larimer F."/>
            <person name="Land M."/>
            <person name="Hauser L."/>
            <person name="Worsham P."/>
            <person name="Chu M."/>
            <person name="Bearden S."/>
            <person name="Garcia E."/>
            <person name="Richardson P."/>
        </authorList>
    </citation>
    <scope>NUCLEOTIDE SEQUENCE [LARGE SCALE GENOMIC DNA]</scope>
    <source>
        <strain>Pestoides F</strain>
    </source>
</reference>
<dbReference type="EMBL" id="CP000668">
    <property type="protein sequence ID" value="ABP41424.1"/>
    <property type="molecule type" value="Genomic_DNA"/>
</dbReference>
<dbReference type="RefSeq" id="WP_002209458.1">
    <property type="nucleotide sequence ID" value="NZ_CP009715.1"/>
</dbReference>
<dbReference type="SMR" id="A4TQ62"/>
<dbReference type="GeneID" id="96664341"/>
<dbReference type="KEGG" id="ypp:YPDSF_3066"/>
<dbReference type="PATRIC" id="fig|386656.14.peg.1294"/>
<dbReference type="GO" id="GO:0005737">
    <property type="term" value="C:cytoplasm"/>
    <property type="evidence" value="ECO:0007669"/>
    <property type="project" value="UniProtKB-ARBA"/>
</dbReference>
<dbReference type="GO" id="GO:0015935">
    <property type="term" value="C:small ribosomal subunit"/>
    <property type="evidence" value="ECO:0007669"/>
    <property type="project" value="TreeGrafter"/>
</dbReference>
<dbReference type="GO" id="GO:0003735">
    <property type="term" value="F:structural constituent of ribosome"/>
    <property type="evidence" value="ECO:0007669"/>
    <property type="project" value="InterPro"/>
</dbReference>
<dbReference type="GO" id="GO:0006412">
    <property type="term" value="P:translation"/>
    <property type="evidence" value="ECO:0007669"/>
    <property type="project" value="UniProtKB-UniRule"/>
</dbReference>
<dbReference type="FunFam" id="3.30.1320.10:FF:000001">
    <property type="entry name" value="30S ribosomal protein S16"/>
    <property type="match status" value="1"/>
</dbReference>
<dbReference type="Gene3D" id="3.30.1320.10">
    <property type="match status" value="1"/>
</dbReference>
<dbReference type="HAMAP" id="MF_00385">
    <property type="entry name" value="Ribosomal_bS16"/>
    <property type="match status" value="1"/>
</dbReference>
<dbReference type="InterPro" id="IPR000307">
    <property type="entry name" value="Ribosomal_bS16"/>
</dbReference>
<dbReference type="InterPro" id="IPR020592">
    <property type="entry name" value="Ribosomal_bS16_CS"/>
</dbReference>
<dbReference type="InterPro" id="IPR023803">
    <property type="entry name" value="Ribosomal_bS16_dom_sf"/>
</dbReference>
<dbReference type="NCBIfam" id="TIGR00002">
    <property type="entry name" value="S16"/>
    <property type="match status" value="1"/>
</dbReference>
<dbReference type="PANTHER" id="PTHR12919">
    <property type="entry name" value="30S RIBOSOMAL PROTEIN S16"/>
    <property type="match status" value="1"/>
</dbReference>
<dbReference type="PANTHER" id="PTHR12919:SF20">
    <property type="entry name" value="SMALL RIBOSOMAL SUBUNIT PROTEIN BS16M"/>
    <property type="match status" value="1"/>
</dbReference>
<dbReference type="Pfam" id="PF00886">
    <property type="entry name" value="Ribosomal_S16"/>
    <property type="match status" value="1"/>
</dbReference>
<dbReference type="SUPFAM" id="SSF54565">
    <property type="entry name" value="Ribosomal protein S16"/>
    <property type="match status" value="1"/>
</dbReference>
<dbReference type="PROSITE" id="PS00732">
    <property type="entry name" value="RIBOSOMAL_S16"/>
    <property type="match status" value="1"/>
</dbReference>
<keyword id="KW-0687">Ribonucleoprotein</keyword>
<keyword id="KW-0689">Ribosomal protein</keyword>
<name>RS16_YERPP</name>
<feature type="chain" id="PRO_1000049380" description="Small ribosomal subunit protein bS16">
    <location>
        <begin position="1"/>
        <end position="82"/>
    </location>
</feature>
<gene>
    <name evidence="1" type="primary">rpsP</name>
    <name type="ordered locus">YPDSF_3066</name>
</gene>
<accession>A4TQ62</accession>
<comment type="similarity">
    <text evidence="1">Belongs to the bacterial ribosomal protein bS16 family.</text>
</comment>
<sequence length="82" mass="9097">MVTIRLARGGAKKRPFYQVVVTDSRNARDGRFIERVGFFNPIASGQAEALRLDLDRIEHWIGLGATVSDRVSVLIKDAKKAA</sequence>
<evidence type="ECO:0000255" key="1">
    <source>
        <dbReference type="HAMAP-Rule" id="MF_00385"/>
    </source>
</evidence>
<evidence type="ECO:0000305" key="2"/>
<protein>
    <recommendedName>
        <fullName evidence="1">Small ribosomal subunit protein bS16</fullName>
    </recommendedName>
    <alternativeName>
        <fullName evidence="2">30S ribosomal protein S16</fullName>
    </alternativeName>
</protein>